<protein>
    <recommendedName>
        <fullName evidence="15">Calcium-dependent protein kinase 7</fullName>
        <shortName evidence="15">OsCDPK7</shortName>
        <shortName evidence="10">OsCPK7</shortName>
        <ecNumber evidence="15">2.7.11.1</ecNumber>
    </recommendedName>
    <alternativeName>
        <fullName evidence="14">Calcium-dependent protein kinase OsCDPK1</fullName>
    </alternativeName>
    <alternativeName>
        <fullName evidence="9 12">Calcium-dependent protein kinase OsCDPK13</fullName>
    </alternativeName>
    <alternativeName>
        <fullName evidence="11">Calcium-dependent protein kinase isoform 11</fullName>
        <shortName evidence="11">OsCPKII</shortName>
    </alternativeName>
</protein>
<sequence length="542" mass="61153">MGNQCQNGTLGSDYHNRFPREHAVGYVQGDSYLDLKKFDDTWPEVNNFKPTAASILRRGLDPTSINVLGRKTADLREHYIIGRKLGQGQFGTTYLCTEINTGCEYACKTIPKRKLITKEDVEDVRREIQIMHHLSGHKNVVAIKDVYEDGQAVHIVMELCAGGELFDRIQEKGHYSERKAAELIRIIVSIVAMCHSLGVMHRDLKPENFLLLDKDDDLSIKAIDFGLSVFFKPGQVFTELVGSPYYVAPEVLHKRYGPESDVWSAGVILYVLLSGVPPFWAETQQGIFDAVLKGHIDFQSDPWPKISDSAKDLIRKMLSHCPSERLKAHEVLRHPWICENGVATDQALDPSVISRLKQFSAMNKLKKLALRVIAERLSEEEIAGLREMFKAVDTKNRGVITFGELREGLRRFGAEFKDTEIGDIMEAAHNDNNVTIHYEEFIAATLPLNKIEREEHLLAAFTYFDKDGSGYITVDKLQRACGEHNMEDSLLEEIISEVDQNNDGQIDYAEFVAMMQGSNVGLGWQTMESSLNVALRDAPQVH</sequence>
<organism>
    <name type="scientific">Oryza sativa subsp. japonica</name>
    <name type="common">Rice</name>
    <dbReference type="NCBI Taxonomy" id="39947"/>
    <lineage>
        <taxon>Eukaryota</taxon>
        <taxon>Viridiplantae</taxon>
        <taxon>Streptophyta</taxon>
        <taxon>Embryophyta</taxon>
        <taxon>Tracheophyta</taxon>
        <taxon>Spermatophyta</taxon>
        <taxon>Magnoliopsida</taxon>
        <taxon>Liliopsida</taxon>
        <taxon>Poales</taxon>
        <taxon>Poaceae</taxon>
        <taxon>BOP clade</taxon>
        <taxon>Oryzoideae</taxon>
        <taxon>Oryzeae</taxon>
        <taxon>Oryzinae</taxon>
        <taxon>Oryza</taxon>
        <taxon>Oryza sativa</taxon>
    </lineage>
</organism>
<keyword id="KW-0067">ATP-binding</keyword>
<keyword id="KW-0106">Calcium</keyword>
<keyword id="KW-0963">Cytoplasm</keyword>
<keyword id="KW-0418">Kinase</keyword>
<keyword id="KW-0449">Lipoprotein</keyword>
<keyword id="KW-0472">Membrane</keyword>
<keyword id="KW-0479">Metal-binding</keyword>
<keyword id="KW-0519">Myristate</keyword>
<keyword id="KW-0547">Nucleotide-binding</keyword>
<keyword id="KW-0597">Phosphoprotein</keyword>
<keyword id="KW-1185">Reference proteome</keyword>
<keyword id="KW-0677">Repeat</keyword>
<keyword id="KW-0723">Serine/threonine-protein kinase</keyword>
<keyword id="KW-0346">Stress response</keyword>
<keyword id="KW-0808">Transferase</keyword>
<comment type="function">
    <text evidence="1 6">May play a role in signal transduction pathways that involve calcium as a second messenger (By similarity). May be a signaling component in the response to gibberellin and cold stress (PubMed:15604699).</text>
</comment>
<comment type="catalytic activity">
    <reaction evidence="15">
        <text>L-seryl-[protein] + ATP = O-phospho-L-seryl-[protein] + ADP + H(+)</text>
        <dbReference type="Rhea" id="RHEA:17989"/>
        <dbReference type="Rhea" id="RHEA-COMP:9863"/>
        <dbReference type="Rhea" id="RHEA-COMP:11604"/>
        <dbReference type="ChEBI" id="CHEBI:15378"/>
        <dbReference type="ChEBI" id="CHEBI:29999"/>
        <dbReference type="ChEBI" id="CHEBI:30616"/>
        <dbReference type="ChEBI" id="CHEBI:83421"/>
        <dbReference type="ChEBI" id="CHEBI:456216"/>
        <dbReference type="EC" id="2.7.11.1"/>
    </reaction>
</comment>
<comment type="catalytic activity">
    <reaction evidence="15">
        <text>L-threonyl-[protein] + ATP = O-phospho-L-threonyl-[protein] + ADP + H(+)</text>
        <dbReference type="Rhea" id="RHEA:46608"/>
        <dbReference type="Rhea" id="RHEA-COMP:11060"/>
        <dbReference type="Rhea" id="RHEA-COMP:11605"/>
        <dbReference type="ChEBI" id="CHEBI:15378"/>
        <dbReference type="ChEBI" id="CHEBI:30013"/>
        <dbReference type="ChEBI" id="CHEBI:30616"/>
        <dbReference type="ChEBI" id="CHEBI:61977"/>
        <dbReference type="ChEBI" id="CHEBI:456216"/>
        <dbReference type="EC" id="2.7.11.1"/>
    </reaction>
</comment>
<comment type="activity regulation">
    <text evidence="1">Activated by calcium. Autophosphorylation may play an important role in the regulation of the kinase activity.</text>
</comment>
<comment type="subcellular location">
    <subcellularLocation>
        <location evidence="15">Membrane</location>
        <topology evidence="15">Lipid-anchor</topology>
    </subcellularLocation>
    <subcellularLocation>
        <location evidence="6">Cytoplasm</location>
        <location evidence="6">Cytosol</location>
    </subcellularLocation>
</comment>
<comment type="tissue specificity">
    <text evidence="6 8">Expressed in roots (Ref.2). Expressed in leaf sheaths (PubMed:15604699, Ref.2).</text>
</comment>
<comment type="induction">
    <text evidence="6 7 8">By gibberellin (PubMed:15604699, Ref.2). Induced by cold stress (PubMed:15604699, PubMed:26681628, Ref.2). Down-regulated by brassinosteroid, abscisic acid (ABA), and drought or cold stresses (PubMed:15604699).</text>
</comment>
<comment type="domain">
    <text evidence="1">There are 3 contiguous domains conserved in the CDPK subfamily: a kinase domain, an autoinhibitory (junction) domain and a calmodulin-like domain. The autoinhibitory domain (343-373) inactivates kinase activity under calcium-free conditions.</text>
</comment>
<comment type="miscellaneous">
    <text evidence="6">Plants over-expressing CPK7 show increased recovery rates after cold stress.</text>
</comment>
<comment type="similarity">
    <text evidence="15">Belongs to the protein kinase superfamily. Ser/Thr protein kinase family. CDPK subfamily.</text>
</comment>
<comment type="sequence caution" evidence="15">
    <conflict type="erroneous gene model prediction">
        <sequence resource="EMBL-CDS" id="AAN17388"/>
    </conflict>
</comment>
<name>CDPK7_ORYSJ</name>
<evidence type="ECO:0000250" key="1">
    <source>
        <dbReference type="UniProtKB" id="Q06850"/>
    </source>
</evidence>
<evidence type="ECO:0000255" key="2"/>
<evidence type="ECO:0000255" key="3">
    <source>
        <dbReference type="PROSITE-ProRule" id="PRU00159"/>
    </source>
</evidence>
<evidence type="ECO:0000255" key="4">
    <source>
        <dbReference type="PROSITE-ProRule" id="PRU00448"/>
    </source>
</evidence>
<evidence type="ECO:0000255" key="5">
    <source>
        <dbReference type="PROSITE-ProRule" id="PRU10027"/>
    </source>
</evidence>
<evidence type="ECO:0000269" key="6">
    <source>
    </source>
</evidence>
<evidence type="ECO:0000269" key="7">
    <source>
    </source>
</evidence>
<evidence type="ECO:0000269" key="8">
    <source ref="2"/>
</evidence>
<evidence type="ECO:0000303" key="9">
    <source>
    </source>
</evidence>
<evidence type="ECO:0000303" key="10">
    <source>
    </source>
</evidence>
<evidence type="ECO:0000303" key="11">
    <source>
    </source>
</evidence>
<evidence type="ECO:0000303" key="12">
    <source ref="2"/>
</evidence>
<evidence type="ECO:0000303" key="13">
    <source ref="3"/>
</evidence>
<evidence type="ECO:0000303" key="14">
    <source ref="4"/>
</evidence>
<evidence type="ECO:0000305" key="15"/>
<evidence type="ECO:0000312" key="16">
    <source>
        <dbReference type="EMBL" id="AAN17388.1"/>
    </source>
</evidence>
<evidence type="ECO:0000312" key="17">
    <source>
        <dbReference type="EMBL" id="ABF93779.1"/>
    </source>
</evidence>
<evidence type="ECO:0000312" key="18">
    <source>
        <dbReference type="EMBL" id="BAF10756.1"/>
    </source>
</evidence>
<gene>
    <name evidence="10" type="primary">CPK7</name>
    <name evidence="14" type="synonym">CDPK1</name>
    <name evidence="13" type="synonym">CDPK12</name>
    <name evidence="11" type="synonym">CPK11</name>
    <name evidence="18" type="ordered locus">Os03g0128700</name>
    <name evidence="17" type="ordered locus">LOC_Os03g03660</name>
    <name evidence="16" type="ORF">OJ1528D07.2</name>
</gene>
<accession>P53684</accession>
<accession>A0A0P0VSL0</accession>
<accession>O65003</accession>
<accession>Q10SB0</accession>
<accession>Q8GV21</accession>
<accession>Q8H889</accession>
<accession>Q8H9A7</accession>
<accession>Q9SNK9</accession>
<feature type="initiator methionine" description="Removed" evidence="2">
    <location>
        <position position="1"/>
    </location>
</feature>
<feature type="chain" id="PRO_0000085831" description="Calcium-dependent protein kinase 7">
    <location>
        <begin position="2"/>
        <end position="542"/>
    </location>
</feature>
<feature type="domain" description="Protein kinase" evidence="3">
    <location>
        <begin position="79"/>
        <end position="337"/>
    </location>
</feature>
<feature type="domain" description="EF-hand 1" evidence="4">
    <location>
        <begin position="380"/>
        <end position="415"/>
    </location>
</feature>
<feature type="domain" description="EF-hand 2; degenerate" evidence="15">
    <location>
        <begin position="416"/>
        <end position="451"/>
    </location>
</feature>
<feature type="domain" description="EF-hand 3" evidence="4">
    <location>
        <begin position="452"/>
        <end position="487"/>
    </location>
</feature>
<feature type="domain" description="EF-hand 4" evidence="4">
    <location>
        <begin position="488"/>
        <end position="521"/>
    </location>
</feature>
<feature type="region of interest" description="Autoinhibitory domain" evidence="1">
    <location>
        <begin position="343"/>
        <end position="373"/>
    </location>
</feature>
<feature type="active site" description="Proton acceptor" evidence="3 5">
    <location>
        <position position="203"/>
    </location>
</feature>
<feature type="binding site" evidence="3">
    <location>
        <begin position="85"/>
        <end position="93"/>
    </location>
    <ligand>
        <name>ATP</name>
        <dbReference type="ChEBI" id="CHEBI:30616"/>
    </ligand>
</feature>
<feature type="binding site" evidence="3">
    <location>
        <position position="108"/>
    </location>
    <ligand>
        <name>ATP</name>
        <dbReference type="ChEBI" id="CHEBI:30616"/>
    </ligand>
</feature>
<feature type="binding site" evidence="15">
    <location>
        <position position="393"/>
    </location>
    <ligand>
        <name>Ca(2+)</name>
        <dbReference type="ChEBI" id="CHEBI:29108"/>
        <label>1</label>
    </ligand>
</feature>
<feature type="binding site" evidence="15">
    <location>
        <position position="404"/>
    </location>
    <ligand>
        <name>Ca(2+)</name>
        <dbReference type="ChEBI" id="CHEBI:29108"/>
        <label>1</label>
    </ligand>
</feature>
<feature type="binding site" evidence="15">
    <location>
        <position position="431"/>
    </location>
    <ligand>
        <name>Ca(2+)</name>
        <dbReference type="ChEBI" id="CHEBI:29108"/>
        <label>2</label>
    </ligand>
</feature>
<feature type="binding site" evidence="15">
    <location>
        <position position="433"/>
    </location>
    <ligand>
        <name>Ca(2+)</name>
        <dbReference type="ChEBI" id="CHEBI:29108"/>
        <label>2</label>
    </ligand>
</feature>
<feature type="binding site" evidence="15">
    <location>
        <position position="435"/>
    </location>
    <ligand>
        <name>Ca(2+)</name>
        <dbReference type="ChEBI" id="CHEBI:29108"/>
        <label>2</label>
    </ligand>
</feature>
<feature type="binding site" evidence="15">
    <location>
        <position position="440"/>
    </location>
    <ligand>
        <name>Ca(2+)</name>
        <dbReference type="ChEBI" id="CHEBI:29108"/>
        <label>2</label>
    </ligand>
</feature>
<feature type="binding site" evidence="15">
    <location>
        <position position="465"/>
    </location>
    <ligand>
        <name>Ca(2+)</name>
        <dbReference type="ChEBI" id="CHEBI:29108"/>
        <label>3</label>
    </ligand>
</feature>
<feature type="binding site" evidence="15">
    <location>
        <position position="467"/>
    </location>
    <ligand>
        <name>Ca(2+)</name>
        <dbReference type="ChEBI" id="CHEBI:29108"/>
        <label>3</label>
    </ligand>
</feature>
<feature type="binding site" evidence="15">
    <location>
        <position position="469"/>
    </location>
    <ligand>
        <name>Ca(2+)</name>
        <dbReference type="ChEBI" id="CHEBI:29108"/>
        <label>3</label>
    </ligand>
</feature>
<feature type="binding site" evidence="15">
    <location>
        <position position="471"/>
    </location>
    <ligand>
        <name>Ca(2+)</name>
        <dbReference type="ChEBI" id="CHEBI:29108"/>
        <label>3</label>
    </ligand>
</feature>
<feature type="binding site" evidence="15">
    <location>
        <position position="476"/>
    </location>
    <ligand>
        <name>Ca(2+)</name>
        <dbReference type="ChEBI" id="CHEBI:29108"/>
        <label>3</label>
    </ligand>
</feature>
<feature type="binding site" evidence="4">
    <location>
        <position position="499"/>
    </location>
    <ligand>
        <name>Ca(2+)</name>
        <dbReference type="ChEBI" id="CHEBI:29108"/>
        <label>4</label>
    </ligand>
</feature>
<feature type="binding site" evidence="4">
    <location>
        <position position="501"/>
    </location>
    <ligand>
        <name>Ca(2+)</name>
        <dbReference type="ChEBI" id="CHEBI:29108"/>
        <label>4</label>
    </ligand>
</feature>
<feature type="binding site" evidence="4">
    <location>
        <position position="503"/>
    </location>
    <ligand>
        <name>Ca(2+)</name>
        <dbReference type="ChEBI" id="CHEBI:29108"/>
        <label>4</label>
    </ligand>
</feature>
<feature type="binding site" evidence="4">
    <location>
        <position position="505"/>
    </location>
    <ligand>
        <name>Ca(2+)</name>
        <dbReference type="ChEBI" id="CHEBI:29108"/>
        <label>4</label>
    </ligand>
</feature>
<feature type="binding site" evidence="4">
    <location>
        <position position="510"/>
    </location>
    <ligand>
        <name>Ca(2+)</name>
        <dbReference type="ChEBI" id="CHEBI:29108"/>
        <label>4</label>
    </ligand>
</feature>
<feature type="lipid moiety-binding region" description="N-myristoyl glycine" evidence="2">
    <location>
        <position position="2"/>
    </location>
</feature>
<feature type="sequence conflict" description="In Ref. 1; CAA57156." evidence="15" ref="1">
    <original>G</original>
    <variation>A</variation>
    <location>
        <position position="88"/>
    </location>
</feature>
<feature type="sequence conflict" description="In Ref. 2; BAC19839." evidence="15" ref="2">
    <original>L</original>
    <variation>P</variation>
    <location>
        <position position="159"/>
    </location>
</feature>
<feature type="sequence conflict" description="In Ref. 2; BAC19839." evidence="15" ref="2">
    <original>L</original>
    <variation>W</variation>
    <location>
        <position position="252"/>
    </location>
</feature>
<feature type="sequence conflict" description="In Ref. 3; AAC05270." evidence="15" ref="3">
    <original>K</original>
    <variation>E</variation>
    <location>
        <position position="357"/>
    </location>
</feature>
<feature type="sequence conflict" description="In Ref. 3; AAC05270." evidence="15" ref="3">
    <original>I</original>
    <variation>M</variation>
    <location>
        <position position="451"/>
    </location>
</feature>
<feature type="sequence conflict" description="In Ref. 3; AAC05270." evidence="15" ref="3">
    <original>Q</original>
    <variation>R</variation>
    <location>
        <position position="478"/>
    </location>
</feature>
<feature type="sequence conflict" description="In Ref. 3; AAC05270." evidence="15" ref="3">
    <original>E</original>
    <variation>Q</variation>
    <location>
        <position position="497"/>
    </location>
</feature>
<feature type="sequence conflict" description="In Ref. 3; AAC05270." evidence="15" ref="3">
    <original>Q</original>
    <variation>P</variation>
    <location>
        <position position="516"/>
    </location>
</feature>
<feature type="sequence conflict" description="In Ref. 3; AAC05270." evidence="15" ref="3">
    <original>G</original>
    <variation>R</variation>
    <location>
        <position position="523"/>
    </location>
</feature>
<dbReference type="EC" id="2.7.11.1" evidence="15"/>
<dbReference type="EMBL" id="X81393">
    <property type="protein sequence ID" value="CAA57156.1"/>
    <property type="molecule type" value="mRNA"/>
</dbReference>
<dbReference type="EMBL" id="AB078634">
    <property type="protein sequence ID" value="BAC19839.1"/>
    <property type="molecule type" value="mRNA"/>
</dbReference>
<dbReference type="EMBL" id="AF048691">
    <property type="protein sequence ID" value="AAC05270.1"/>
    <property type="molecule type" value="mRNA"/>
</dbReference>
<dbReference type="EMBL" id="AY158077">
    <property type="protein sequence ID" value="AAN76358.1"/>
    <property type="molecule type" value="mRNA"/>
</dbReference>
<dbReference type="EMBL" id="AC099739">
    <property type="protein sequence ID" value="AAN17388.1"/>
    <property type="status" value="ALT_SEQ"/>
    <property type="molecule type" value="Genomic_DNA"/>
</dbReference>
<dbReference type="EMBL" id="AP000615">
    <property type="protein sequence ID" value="BAA85396.1"/>
    <property type="molecule type" value="Genomic_DNA"/>
</dbReference>
<dbReference type="EMBL" id="DP000009">
    <property type="protein sequence ID" value="ABF93779.1"/>
    <property type="molecule type" value="Genomic_DNA"/>
</dbReference>
<dbReference type="EMBL" id="DP000009">
    <property type="protein sequence ID" value="ABF93780.1"/>
    <property type="molecule type" value="Genomic_DNA"/>
</dbReference>
<dbReference type="EMBL" id="DP000009">
    <property type="protein sequence ID" value="ABF93781.1"/>
    <property type="molecule type" value="Genomic_DNA"/>
</dbReference>
<dbReference type="EMBL" id="AP008209">
    <property type="protein sequence ID" value="BAF10756.1"/>
    <property type="molecule type" value="Genomic_DNA"/>
</dbReference>
<dbReference type="EMBL" id="AP014959">
    <property type="protein sequence ID" value="BAS82107.1"/>
    <property type="molecule type" value="Genomic_DNA"/>
</dbReference>
<dbReference type="PIR" id="S56651">
    <property type="entry name" value="S56651"/>
</dbReference>
<dbReference type="RefSeq" id="NP_001388959.1">
    <property type="nucleotide sequence ID" value="NM_001402030.1"/>
</dbReference>
<dbReference type="RefSeq" id="NP_001388960.1">
    <property type="nucleotide sequence ID" value="NM_001402031.1"/>
</dbReference>
<dbReference type="RefSeq" id="XP_015631535.1">
    <property type="nucleotide sequence ID" value="XM_015776049.1"/>
</dbReference>
<dbReference type="RefSeq" id="XP_015631536.1">
    <property type="nucleotide sequence ID" value="XM_015776050.1"/>
</dbReference>
<dbReference type="SMR" id="P53684"/>
<dbReference type="FunCoup" id="P53684">
    <property type="interactions" value="1714"/>
</dbReference>
<dbReference type="STRING" id="39947.P53684"/>
<dbReference type="PaxDb" id="39947-P53684"/>
<dbReference type="EnsemblPlants" id="Os03t0128700-01">
    <property type="protein sequence ID" value="Os03t0128700-01"/>
    <property type="gene ID" value="Os03g0128700"/>
</dbReference>
<dbReference type="GeneID" id="4331490"/>
<dbReference type="Gramene" id="Os03t0128700-01">
    <property type="protein sequence ID" value="Os03t0128700-01"/>
    <property type="gene ID" value="Os03g0128700"/>
</dbReference>
<dbReference type="KEGG" id="dosa:Os03g0128700"/>
<dbReference type="eggNOG" id="KOG0032">
    <property type="taxonomic scope" value="Eukaryota"/>
</dbReference>
<dbReference type="HOGENOM" id="CLU_000288_37_4_1"/>
<dbReference type="InParanoid" id="P53684"/>
<dbReference type="OMA" id="DAPQCQA"/>
<dbReference type="OrthoDB" id="40902at2759"/>
<dbReference type="BRENDA" id="2.7.11.1">
    <property type="organism ID" value="4460"/>
</dbReference>
<dbReference type="Proteomes" id="UP000000763">
    <property type="component" value="Chromosome 3"/>
</dbReference>
<dbReference type="Proteomes" id="UP000059680">
    <property type="component" value="Chromosome 3"/>
</dbReference>
<dbReference type="GO" id="GO:0005737">
    <property type="term" value="C:cytoplasm"/>
    <property type="evidence" value="ECO:0000318"/>
    <property type="project" value="GO_Central"/>
</dbReference>
<dbReference type="GO" id="GO:0005829">
    <property type="term" value="C:cytosol"/>
    <property type="evidence" value="ECO:0000314"/>
    <property type="project" value="UniProtKB"/>
</dbReference>
<dbReference type="GO" id="GO:0005634">
    <property type="term" value="C:nucleus"/>
    <property type="evidence" value="ECO:0000318"/>
    <property type="project" value="GO_Central"/>
</dbReference>
<dbReference type="GO" id="GO:0005886">
    <property type="term" value="C:plasma membrane"/>
    <property type="evidence" value="ECO:0000314"/>
    <property type="project" value="UniProtKB"/>
</dbReference>
<dbReference type="GO" id="GO:0005524">
    <property type="term" value="F:ATP binding"/>
    <property type="evidence" value="ECO:0007669"/>
    <property type="project" value="UniProtKB-KW"/>
</dbReference>
<dbReference type="GO" id="GO:0005509">
    <property type="term" value="F:calcium ion binding"/>
    <property type="evidence" value="ECO:0007669"/>
    <property type="project" value="InterPro"/>
</dbReference>
<dbReference type="GO" id="GO:0009931">
    <property type="term" value="F:calcium-dependent protein serine/threonine kinase activity"/>
    <property type="evidence" value="ECO:0000318"/>
    <property type="project" value="GO_Central"/>
</dbReference>
<dbReference type="GO" id="GO:0004683">
    <property type="term" value="F:calcium/calmodulin-dependent protein kinase activity"/>
    <property type="evidence" value="ECO:0000318"/>
    <property type="project" value="GO_Central"/>
</dbReference>
<dbReference type="GO" id="GO:0005516">
    <property type="term" value="F:calmodulin binding"/>
    <property type="evidence" value="ECO:0000318"/>
    <property type="project" value="GO_Central"/>
</dbReference>
<dbReference type="GO" id="GO:0106310">
    <property type="term" value="F:protein serine kinase activity"/>
    <property type="evidence" value="ECO:0007669"/>
    <property type="project" value="RHEA"/>
</dbReference>
<dbReference type="GO" id="GO:0035556">
    <property type="term" value="P:intracellular signal transduction"/>
    <property type="evidence" value="ECO:0000318"/>
    <property type="project" value="GO_Central"/>
</dbReference>
<dbReference type="GO" id="GO:0009409">
    <property type="term" value="P:response to cold"/>
    <property type="evidence" value="ECO:0000315"/>
    <property type="project" value="UniProtKB"/>
</dbReference>
<dbReference type="CDD" id="cd00051">
    <property type="entry name" value="EFh"/>
    <property type="match status" value="1"/>
</dbReference>
<dbReference type="CDD" id="cd05117">
    <property type="entry name" value="STKc_CAMK"/>
    <property type="match status" value="1"/>
</dbReference>
<dbReference type="FunFam" id="1.10.238.10:FF:000015">
    <property type="entry name" value="Calcium-dependent protein kinase 1"/>
    <property type="match status" value="1"/>
</dbReference>
<dbReference type="FunFam" id="3.30.200.20:FF:000004">
    <property type="entry name" value="Calcium-dependent protein kinase 1"/>
    <property type="match status" value="1"/>
</dbReference>
<dbReference type="FunFam" id="1.10.510.10:FF:000249">
    <property type="entry name" value="Calcium-dependent protein kinase SK5"/>
    <property type="match status" value="1"/>
</dbReference>
<dbReference type="Gene3D" id="1.10.238.10">
    <property type="entry name" value="EF-hand"/>
    <property type="match status" value="2"/>
</dbReference>
<dbReference type="Gene3D" id="3.30.200.20">
    <property type="entry name" value="Phosphorylase Kinase, domain 1"/>
    <property type="match status" value="1"/>
</dbReference>
<dbReference type="Gene3D" id="1.10.510.10">
    <property type="entry name" value="Transferase(Phosphotransferase) domain 1"/>
    <property type="match status" value="1"/>
</dbReference>
<dbReference type="InterPro" id="IPR050205">
    <property type="entry name" value="CDPK_Ser/Thr_kinases"/>
</dbReference>
<dbReference type="InterPro" id="IPR011992">
    <property type="entry name" value="EF-hand-dom_pair"/>
</dbReference>
<dbReference type="InterPro" id="IPR018247">
    <property type="entry name" value="EF_Hand_1_Ca_BS"/>
</dbReference>
<dbReference type="InterPro" id="IPR002048">
    <property type="entry name" value="EF_hand_dom"/>
</dbReference>
<dbReference type="InterPro" id="IPR011009">
    <property type="entry name" value="Kinase-like_dom_sf"/>
</dbReference>
<dbReference type="InterPro" id="IPR000719">
    <property type="entry name" value="Prot_kinase_dom"/>
</dbReference>
<dbReference type="InterPro" id="IPR017441">
    <property type="entry name" value="Protein_kinase_ATP_BS"/>
</dbReference>
<dbReference type="InterPro" id="IPR008271">
    <property type="entry name" value="Ser/Thr_kinase_AS"/>
</dbReference>
<dbReference type="PANTHER" id="PTHR24349">
    <property type="entry name" value="SERINE/THREONINE-PROTEIN KINASE"/>
    <property type="match status" value="1"/>
</dbReference>
<dbReference type="Pfam" id="PF13499">
    <property type="entry name" value="EF-hand_7"/>
    <property type="match status" value="2"/>
</dbReference>
<dbReference type="Pfam" id="PF00069">
    <property type="entry name" value="Pkinase"/>
    <property type="match status" value="1"/>
</dbReference>
<dbReference type="SMART" id="SM00054">
    <property type="entry name" value="EFh"/>
    <property type="match status" value="4"/>
</dbReference>
<dbReference type="SMART" id="SM00220">
    <property type="entry name" value="S_TKc"/>
    <property type="match status" value="1"/>
</dbReference>
<dbReference type="SUPFAM" id="SSF47473">
    <property type="entry name" value="EF-hand"/>
    <property type="match status" value="1"/>
</dbReference>
<dbReference type="SUPFAM" id="SSF56112">
    <property type="entry name" value="Protein kinase-like (PK-like)"/>
    <property type="match status" value="1"/>
</dbReference>
<dbReference type="PROSITE" id="PS00018">
    <property type="entry name" value="EF_HAND_1"/>
    <property type="match status" value="1"/>
</dbReference>
<dbReference type="PROSITE" id="PS50222">
    <property type="entry name" value="EF_HAND_2"/>
    <property type="match status" value="3"/>
</dbReference>
<dbReference type="PROSITE" id="PS00107">
    <property type="entry name" value="PROTEIN_KINASE_ATP"/>
    <property type="match status" value="1"/>
</dbReference>
<dbReference type="PROSITE" id="PS50011">
    <property type="entry name" value="PROTEIN_KINASE_DOM"/>
    <property type="match status" value="1"/>
</dbReference>
<dbReference type="PROSITE" id="PS00108">
    <property type="entry name" value="PROTEIN_KINASE_ST"/>
    <property type="match status" value="1"/>
</dbReference>
<proteinExistence type="evidence at transcript level"/>
<reference key="1">
    <citation type="journal article" date="1995" name="Plant Mol. Biol.">
        <title>Molecular cloning of two novel rice cDNA sequences encoding putative calcium-dependent protein kinases.</title>
        <authorList>
            <person name="Breviario D."/>
            <person name="Morello L."/>
            <person name="Giani S."/>
        </authorList>
    </citation>
    <scope>NUCLEOTIDE SEQUENCE [MRNA]</scope>
    <source>
        <strain>cv. Arborio</strain>
        <tissue>Coleoptile</tissue>
    </source>
</reference>
<reference key="2">
    <citation type="journal article" date="2003" name="Plant Physiol. Biochem.">
        <title>OsCDPK13, a calcium-dependent protein kinase gene from rice, is induced in response to cold and gibberellin.</title>
        <authorList>
            <person name="Yang G."/>
            <person name="Shen S."/>
            <person name="Yang S."/>
            <person name="Komatsu S."/>
        </authorList>
    </citation>
    <scope>NUCLEOTIDE SEQUENCE [MRNA]</scope>
    <scope>TISSUE SPECIFICITY</scope>
    <scope>INDUCTION</scope>
</reference>
<reference key="3">
    <citation type="submission" date="1998-02" db="EMBL/GenBank/DDBJ databases">
        <title>Nucleotide sequence of rice calcium dependent protein kinase.</title>
        <authorList>
            <person name="Yun C.-H."/>
            <person name="Park J.-H."/>
            <person name="Lee G.-R."/>
            <person name="Seok S.J."/>
        </authorList>
    </citation>
    <scope>NUCLEOTIDE SEQUENCE [MRNA]</scope>
    <source>
        <strain>cv. Ilpoombyeo</strain>
    </source>
</reference>
<reference key="4">
    <citation type="submission" date="2002-10" db="EMBL/GenBank/DDBJ databases">
        <title>Molecular cloning and functional analysis of a rice calcium-dependent protein kinase, OsCDPK1.</title>
        <authorList>
            <person name="Ho S.-L."/>
        </authorList>
    </citation>
    <scope>NUCLEOTIDE SEQUENCE [MRNA]</scope>
    <source>
        <tissue>Callus</tissue>
    </source>
</reference>
<reference key="5">
    <citation type="journal article" date="2005" name="Genome Res.">
        <title>Sequence, annotation, and analysis of synteny between rice chromosome 3 and diverged grass species.</title>
        <authorList>
            <consortium name="The rice chromosome 3 sequencing consortium"/>
            <person name="Buell C.R."/>
            <person name="Yuan Q."/>
            <person name="Ouyang S."/>
            <person name="Liu J."/>
            <person name="Zhu W."/>
            <person name="Wang A."/>
            <person name="Maiti R."/>
            <person name="Haas B."/>
            <person name="Wortman J."/>
            <person name="Pertea M."/>
            <person name="Jones K.M."/>
            <person name="Kim M."/>
            <person name="Overton L."/>
            <person name="Tsitrin T."/>
            <person name="Fadrosh D."/>
            <person name="Bera J."/>
            <person name="Weaver B."/>
            <person name="Jin S."/>
            <person name="Johri S."/>
            <person name="Reardon M."/>
            <person name="Webb K."/>
            <person name="Hill J."/>
            <person name="Moffat K."/>
            <person name="Tallon L."/>
            <person name="Van Aken S."/>
            <person name="Lewis M."/>
            <person name="Utterback T."/>
            <person name="Feldblyum T."/>
            <person name="Zismann V."/>
            <person name="Iobst S."/>
            <person name="Hsiao J."/>
            <person name="de Vazeille A.R."/>
            <person name="Salzberg S.L."/>
            <person name="White O."/>
            <person name="Fraser C.M."/>
            <person name="Yu Y."/>
            <person name="Kim H."/>
            <person name="Rambo T."/>
            <person name="Currie J."/>
            <person name="Collura K."/>
            <person name="Kernodle-Thompson S."/>
            <person name="Wei F."/>
            <person name="Kudrna K."/>
            <person name="Ammiraju J.S.S."/>
            <person name="Luo M."/>
            <person name="Goicoechea J.L."/>
            <person name="Wing R.A."/>
            <person name="Henry D."/>
            <person name="Oates R."/>
            <person name="Palmer M."/>
            <person name="Pries G."/>
            <person name="Saski C."/>
            <person name="Simmons J."/>
            <person name="Soderlund C."/>
            <person name="Nelson W."/>
            <person name="de la Bastide M."/>
            <person name="Spiegel L."/>
            <person name="Nascimento L."/>
            <person name="Huang E."/>
            <person name="Preston R."/>
            <person name="Zutavern T."/>
            <person name="Palmer L."/>
            <person name="O'Shaughnessy A."/>
            <person name="Dike S."/>
            <person name="McCombie W.R."/>
            <person name="Minx P."/>
            <person name="Cordum H."/>
            <person name="Wilson R."/>
            <person name="Jin W."/>
            <person name="Lee H.R."/>
            <person name="Jiang J."/>
            <person name="Jackson S."/>
        </authorList>
    </citation>
    <scope>NUCLEOTIDE SEQUENCE [LARGE SCALE GENOMIC DNA]</scope>
    <source>
        <strain>cv. Nipponbare</strain>
    </source>
</reference>
<reference key="6">
    <citation type="journal article" date="2005" name="Nature">
        <title>The map-based sequence of the rice genome.</title>
        <authorList>
            <consortium name="International rice genome sequencing project (IRGSP)"/>
        </authorList>
    </citation>
    <scope>NUCLEOTIDE SEQUENCE [LARGE SCALE GENOMIC DNA]</scope>
    <source>
        <strain>cv. Nipponbare</strain>
    </source>
</reference>
<reference key="7">
    <citation type="journal article" date="2008" name="Nucleic Acids Res.">
        <title>The rice annotation project database (RAP-DB): 2008 update.</title>
        <authorList>
            <consortium name="The rice annotation project (RAP)"/>
        </authorList>
    </citation>
    <scope>GENOME REANNOTATION</scope>
    <source>
        <strain>cv. Nipponbare</strain>
    </source>
</reference>
<reference key="8">
    <citation type="journal article" date="2013" name="Rice">
        <title>Improvement of the Oryza sativa Nipponbare reference genome using next generation sequence and optical map data.</title>
        <authorList>
            <person name="Kawahara Y."/>
            <person name="de la Bastide M."/>
            <person name="Hamilton J.P."/>
            <person name="Kanamori H."/>
            <person name="McCombie W.R."/>
            <person name="Ouyang S."/>
            <person name="Schwartz D.C."/>
            <person name="Tanaka T."/>
            <person name="Wu J."/>
            <person name="Zhou S."/>
            <person name="Childs K.L."/>
            <person name="Davidson R.M."/>
            <person name="Lin H."/>
            <person name="Quesada-Ocampo L."/>
            <person name="Vaillancourt B."/>
            <person name="Sakai H."/>
            <person name="Lee S.S."/>
            <person name="Kim J."/>
            <person name="Numa H."/>
            <person name="Itoh T."/>
            <person name="Buell C.R."/>
            <person name="Matsumoto T."/>
        </authorList>
    </citation>
    <scope>GENOME REANNOTATION</scope>
    <source>
        <strain>cv. Nipponbare</strain>
    </source>
</reference>
<reference key="9">
    <citation type="journal article" date="2004" name="Plant Mol. Biol.">
        <title>OsCDPK13, a calcium-dependent protein kinase gene from rice, is induced by cold and gibberellin in rice leaf sheath.</title>
        <authorList>
            <person name="Abbasi F."/>
            <person name="Onodera H."/>
            <person name="Toki S."/>
            <person name="Tanaka H."/>
            <person name="Komatsu S."/>
        </authorList>
    </citation>
    <scope>FUNCTION</scope>
    <scope>SUBCELLULAR LOCATION</scope>
    <scope>TISSUE SPECIFICITY</scope>
    <scope>INDUCTION</scope>
</reference>
<reference key="10">
    <citation type="journal article" date="2005" name="Plant Cell Physiol.">
        <title>Genome-wide identification of the rice calcium-dependent protein kinase and its closely related kinase gene families: comprehensive analysis of the CDPKs gene family in rice.</title>
        <authorList>
            <person name="Asano T."/>
            <person name="Tanaka N."/>
            <person name="Yang G."/>
            <person name="Hayashi N."/>
            <person name="Komatsu S."/>
        </authorList>
    </citation>
    <scope>GENE FAMILY</scope>
    <scope>NOMENCLATURE</scope>
</reference>
<reference key="11">
    <citation type="journal article" date="2016" name="Plant Biol.">
        <title>A consortium of rhizobacterial strains and biochemical growth elicitors improve cold and drought stress tolerance in rice (Oryza sativa L.).</title>
        <authorList>
            <person name="Kakar K.U."/>
            <person name="Ren X.L."/>
            <person name="Nawaz Z."/>
            <person name="Cui Z.Q."/>
            <person name="Li B."/>
            <person name="Xie G.L."/>
            <person name="Hassan M.A."/>
            <person name="Ali E."/>
            <person name="Sun G.C."/>
        </authorList>
    </citation>
    <scope>INDUCTION</scope>
</reference>